<protein>
    <recommendedName>
        <fullName>Myosin phosphatase Rho-interacting protein</fullName>
        <shortName>M-RIP</shortName>
    </recommendedName>
    <alternativeName>
        <fullName>Rho-interacting protein 3</fullName>
        <shortName>RIP3</shortName>
    </alternativeName>
    <alternativeName>
        <fullName>p116Rip</fullName>
    </alternativeName>
</protein>
<sequence>MSAAKENPCRKFQANIFNKSKCQNCFKPRESHLLNDEDLTQAKPIYGGWLLLAPDGTDFDNPVHRSRKWQRRFFILYEHGLLRYALDEMPTTLPQGTINMNQCTDVVDGEGRTGQKFSLCILTPEKEHFIRAETKEIVSGWLEMLMVYPRTNKQNQKKKRKVEPPTPQEPGPAKVAVTSSSSSSSSSSSIPSAEKVPTTKSTLWQEEMRTKDQPDGSSLSPAQSPSQSQPPAASSLREPGLESKEEESAMSSDRMDCGRKVRVESGYFSLEKTKQDLKAEEQQLPPPLSPPSPSTPNHRRSQVIEKFEALDIEKAEHMETNAVGPSPSSDTRQGRSEKRAFPRKRDFTNEAPPAPLPDASASPLSPHRRAKSLDRRSTEPSVTPDLLNFKKGWLTKQYEDGQWKKHWFVLADQSLRYYRDSVAEEAADLDGEIDLSACYDVTEYPVQRNYGFQIHTKEGEFTLSAMTSGIRRNWIQTIMKHVHPTTAPDVTSSLPEEKNKSSCSFETCPRPTEKQEAELGEPDPEQKRSRARERRREGRSKTFDWAEFRPIQQALAQERVGGVGPADTHEPLRPEAEPGELERERARRREERRKRFGMLDATDGPGTEDAALRMEVDRSPGLPMSDLKTHNVHVEIEQRWHQVETTPLREEKQVPIAPVHLSSEDGGDRLSTHELTSLLEKELEQSQKEASDLLEQNRLLQDQLRVALGREQSAREGYVLQATCERGFAAMEETHQKKIEDLQRQHQRELEKLREEKDRLLAEETAATISAIEAMKNAHREEMERELEKSQRSQISSVNSDVEALRRQYLEELQSVQRELEVLSEQYSQKCLENAHLAQALEAERQALRQCQRENQELNAHNQELNNRLAAEITRLRTLLTGDGGGEATGSPLAQGKDAYELEVLLRVKESEIQYLKQEISSLKDELQTALRDKKYASDKYKDIYTELSIAKAKADCDISRLKEQLKAATEALGEKSPDSATVSGYDIMKSKSNPDFLKKDRSCVTRQLRNIRSKSVIEQVSWDT</sequence>
<comment type="function">
    <text evidence="2 7 8">Targets myosin phosphatase to the actin cytoskeleton. Required for the regulation of the actin cytoskeleton by RhoA and ROCK1. Depletion leads to an increased number of stress fibers in smooth muscle cells through stabilization of actin fibers by phosphorylated myosin. Overexpression of MRIP as well as its F-actin-binding region leads to disassembly of stress fibers in neuronal cells.</text>
</comment>
<comment type="subunit">
    <text evidence="1 6 7 8">Binds F-actin through its N-terminus. Interacts with MYZAP (By similarity). Binds RHOA, PPP1R12A/MBS and PPP1R12C/MBS85 through adjacent coiled coil domains.</text>
</comment>
<comment type="interaction">
    <interactant intactId="EBI-1022605">
        <id>Q6WCQ1</id>
    </interactant>
    <interactant intactId="EBI-476295">
        <id>P31947</id>
        <label>SFN</label>
    </interactant>
    <organismsDiffer>false</organismsDiffer>
    <experiments>3</experiments>
</comment>
<comment type="interaction">
    <interactant intactId="EBI-1022605">
        <id>Q6WCQ1</id>
    </interactant>
    <interactant intactId="EBI-359854">
        <id>P27348</id>
        <label>YWHAQ</label>
    </interactant>
    <organismsDiffer>false</organismsDiffer>
    <experiments>6</experiments>
</comment>
<comment type="interaction">
    <interactant intactId="EBI-1022605">
        <id>Q6WCQ1</id>
    </interactant>
    <interactant intactId="EBI-347088">
        <id>P63104</id>
        <label>YWHAZ</label>
    </interactant>
    <organismsDiffer>false</organismsDiffer>
    <experiments>5</experiments>
</comment>
<comment type="interaction">
    <interactant intactId="EBI-1022605">
        <id>Q6WCQ1</id>
    </interactant>
    <interactant intactId="EBI-918263">
        <id>Q10728</id>
        <label>Ppp1r12a</label>
    </interactant>
    <organismsDiffer>true</organismsDiffer>
    <experiments>6</experiments>
</comment>
<comment type="subcellular location">
    <subcellularLocation>
        <location evidence="6 8">Cytoplasm</location>
        <location evidence="6 8">Cytoskeleton</location>
    </subcellularLocation>
    <text>Colocalizes with F-actin.</text>
</comment>
<comment type="alternative products">
    <event type="alternative splicing"/>
    <isoform>
        <id>Q6WCQ1-1</id>
        <name evidence="7">1</name>
        <sequence type="displayed"/>
    </isoform>
    <isoform>
        <id>Q6WCQ1-2</id>
        <name evidence="6">2</name>
        <sequence type="described" ref="VSP_051948"/>
    </isoform>
    <isoform>
        <id>Q6WCQ1-3</id>
        <name evidence="14">3</name>
        <sequence type="described" ref="VSP_051947 VSP_051948"/>
    </isoform>
</comment>
<feature type="initiator methionine" description="Removed" evidence="14">
    <location>
        <position position="1"/>
    </location>
</feature>
<feature type="chain" id="PRO_0000223930" description="Myosin phosphatase Rho-interacting protein">
    <location>
        <begin position="2"/>
        <end position="1025"/>
    </location>
</feature>
<feature type="domain" description="PH 1" evidence="4">
    <location>
        <begin position="43"/>
        <end position="150"/>
    </location>
</feature>
<feature type="domain" description="PH 2" evidence="4">
    <location>
        <begin position="387"/>
        <end position="483"/>
    </location>
</feature>
<feature type="region of interest" description="Interaction with F-actin" evidence="1">
    <location>
        <begin position="2"/>
        <end position="383"/>
    </location>
</feature>
<feature type="region of interest" description="Disordered" evidence="5">
    <location>
        <begin position="152"/>
        <end position="302"/>
    </location>
</feature>
<feature type="region of interest" description="Disordered" evidence="5">
    <location>
        <begin position="317"/>
        <end position="383"/>
    </location>
</feature>
<feature type="region of interest" description="Disordered" evidence="5">
    <location>
        <begin position="485"/>
        <end position="545"/>
    </location>
</feature>
<feature type="region of interest" description="Interaction with RHOA" evidence="6">
    <location>
        <begin position="546"/>
        <end position="824"/>
    </location>
</feature>
<feature type="region of interest" description="Disordered" evidence="5">
    <location>
        <begin position="560"/>
        <end position="591"/>
    </location>
</feature>
<feature type="region of interest" description="Interaction with PPP1R12A">
    <location>
        <begin position="824"/>
        <end position="879"/>
    </location>
</feature>
<feature type="coiled-coil region" evidence="3">
    <location>
        <begin position="673"/>
        <end position="977"/>
    </location>
</feature>
<feature type="compositionally biased region" description="Low complexity" evidence="5">
    <location>
        <begin position="179"/>
        <end position="189"/>
    </location>
</feature>
<feature type="compositionally biased region" description="Low complexity" evidence="5">
    <location>
        <begin position="217"/>
        <end position="236"/>
    </location>
</feature>
<feature type="compositionally biased region" description="Basic and acidic residues" evidence="5">
    <location>
        <begin position="239"/>
        <end position="263"/>
    </location>
</feature>
<feature type="compositionally biased region" description="Basic and acidic residues" evidence="5">
    <location>
        <begin position="271"/>
        <end position="281"/>
    </location>
</feature>
<feature type="compositionally biased region" description="Pro residues" evidence="5">
    <location>
        <begin position="284"/>
        <end position="294"/>
    </location>
</feature>
<feature type="compositionally biased region" description="Basic and acidic residues" evidence="5">
    <location>
        <begin position="332"/>
        <end position="348"/>
    </location>
</feature>
<feature type="compositionally biased region" description="Basic and acidic residues" evidence="5">
    <location>
        <begin position="524"/>
        <end position="545"/>
    </location>
</feature>
<feature type="compositionally biased region" description="Basic and acidic residues" evidence="5">
    <location>
        <begin position="567"/>
        <end position="589"/>
    </location>
</feature>
<feature type="modified residue" description="Phosphoserine" evidence="22">
    <location>
        <position position="192"/>
    </location>
</feature>
<feature type="modified residue" description="Phosphoserine" evidence="27">
    <location>
        <position position="217"/>
    </location>
</feature>
<feature type="modified residue" description="Phosphoserine" evidence="2">
    <location>
        <position position="218"/>
    </location>
</feature>
<feature type="modified residue" description="Phosphoserine" evidence="22 24 27">
    <location>
        <position position="220"/>
    </location>
</feature>
<feature type="modified residue" description="Phosphoserine" evidence="22 26">
    <location>
        <position position="224"/>
    </location>
</feature>
<feature type="modified residue" description="Phosphoserine" evidence="22 27">
    <location>
        <position position="226"/>
    </location>
</feature>
<feature type="modified residue" description="Phosphoserine" evidence="26">
    <location>
        <position position="265"/>
    </location>
</feature>
<feature type="modified residue" description="Phosphoserine" evidence="24 26">
    <location>
        <position position="269"/>
    </location>
</feature>
<feature type="modified residue" description="Phosphoserine" evidence="22 23 24">
    <location>
        <position position="289"/>
    </location>
</feature>
<feature type="modified residue" description="Phosphoserine" evidence="22">
    <location>
        <position position="292"/>
    </location>
</feature>
<feature type="modified residue" description="Phosphothreonine" evidence="22">
    <location>
        <position position="295"/>
    </location>
</feature>
<feature type="modified residue" description="Phosphoserine" evidence="26">
    <location>
        <position position="326"/>
    </location>
</feature>
<feature type="modified residue" description="Phosphothreonine" evidence="27">
    <location>
        <position position="348"/>
    </location>
</feature>
<feature type="modified residue" description="Phosphoserine" evidence="22 24 27">
    <location>
        <position position="362"/>
    </location>
</feature>
<feature type="modified residue" description="Phosphoserine" evidence="22 24 27">
    <location>
        <position position="365"/>
    </location>
</feature>
<feature type="modified residue" description="Phosphoserine" evidence="26">
    <location>
        <position position="493"/>
    </location>
</feature>
<feature type="modified residue" description="Phosphoserine" evidence="21 22 24 26">
    <location>
        <position position="619"/>
    </location>
</feature>
<feature type="modified residue" description="Phosphothreonine" evidence="26">
    <location>
        <position position="646"/>
    </location>
</feature>
<feature type="modified residue" description="Phosphoserine" evidence="26">
    <location>
        <position position="663"/>
    </location>
</feature>
<feature type="modified residue" description="Phosphoserine" evidence="27">
    <location>
        <position position="800"/>
    </location>
</feature>
<feature type="modified residue" description="Phosphoserine" evidence="22 24 26 27">
    <location>
        <position position="891"/>
    </location>
</feature>
<feature type="modified residue" description="Phosphoserine" evidence="22 24 25 26">
    <location>
        <position position="977"/>
    </location>
</feature>
<feature type="modified residue" description="Phosphoserine" evidence="25 26">
    <location>
        <position position="993"/>
    </location>
</feature>
<feature type="modified residue" description="Phosphoserine" evidence="2">
    <location>
        <position position="1014"/>
    </location>
</feature>
<feature type="modified residue" description="Phosphoserine" evidence="25">
    <location>
        <position position="1016"/>
    </location>
</feature>
<feature type="splice variant" id="VSP_051947" description="In isoform 3." evidence="11">
    <location>
        <begin position="346"/>
        <end position="383"/>
    </location>
</feature>
<feature type="splice variant" id="VSP_051948" description="In isoform 2 and isoform 3." evidence="11 12 13">
    <original>VIEQVSWDT</original>
    <variation>LKEGLTVQERLKLFESRDLKKD</variation>
    <location>
        <begin position="1017"/>
        <end position="1025"/>
    </location>
</feature>
<feature type="sequence variant" id="VAR_051203" description="In dbSNP:rs3744137." evidence="9 10">
    <original>P</original>
    <variation>Q</variation>
    <location>
        <position position="327"/>
    </location>
</feature>
<feature type="sequence conflict" description="In Ref. 1; AAQ63176." evidence="14" ref="1">
    <original>S</original>
    <variation>P</variation>
    <location>
        <position position="31"/>
    </location>
</feature>
<feature type="sequence conflict" description="In Ref. 2; BAD89507." evidence="14" ref="2">
    <original>S</original>
    <variation>R</variation>
    <location>
        <position position="184"/>
    </location>
</feature>
<feature type="sequence conflict" description="In Ref. 2; BAD89507 and 6; AAH09982." evidence="14" ref="2 6">
    <location>
        <begin position="188"/>
        <end position="189"/>
    </location>
</feature>
<feature type="sequence conflict" description="In Ref. 1; AAQ63176, 3; BAC78198 and 5; CAD39169." evidence="14" ref="1 3 5">
    <location>
        <position position="189"/>
    </location>
</feature>
<feature type="sequence conflict" description="In Ref. 2; BAD89507." evidence="14" ref="2">
    <original>S</original>
    <variation>F</variation>
    <location>
        <position position="235"/>
    </location>
</feature>
<feature type="sequence conflict" description="In Ref. 2; BAD89507." evidence="14" ref="2">
    <original>P</original>
    <variation>S</variation>
    <location>
        <position position="352"/>
    </location>
</feature>
<feature type="sequence conflict" description="In Ref. 1; AAQ63176." evidence="14" ref="1">
    <original>R</original>
    <variation>T</variation>
    <location>
        <position position="528"/>
    </location>
</feature>
<feature type="sequence conflict" description="In Ref. 3; BAC78198 and 5; CAD39169." evidence="14" ref="3 5">
    <original>P</original>
    <variation>L</variation>
    <location>
        <position position="550"/>
    </location>
</feature>
<feature type="sequence conflict" description="In Ref. 1; AAQ63176." evidence="14" ref="1">
    <original>P</original>
    <variation>S</variation>
    <location>
        <position position="578"/>
    </location>
</feature>
<organism>
    <name type="scientific">Homo sapiens</name>
    <name type="common">Human</name>
    <dbReference type="NCBI Taxonomy" id="9606"/>
    <lineage>
        <taxon>Eukaryota</taxon>
        <taxon>Metazoa</taxon>
        <taxon>Chordata</taxon>
        <taxon>Craniata</taxon>
        <taxon>Vertebrata</taxon>
        <taxon>Euteleostomi</taxon>
        <taxon>Mammalia</taxon>
        <taxon>Eutheria</taxon>
        <taxon>Euarchontoglires</taxon>
        <taxon>Primates</taxon>
        <taxon>Haplorrhini</taxon>
        <taxon>Catarrhini</taxon>
        <taxon>Hominidae</taxon>
        <taxon>Homo</taxon>
    </lineage>
</organism>
<name>MPRIP_HUMAN</name>
<proteinExistence type="evidence at protein level"/>
<accession>Q6WCQ1</accession>
<accession>Q3KQZ5</accession>
<accession>Q5FB94</accession>
<accession>Q6DHW2</accession>
<accession>Q7Z5Y2</accession>
<accession>Q8N390</accession>
<accession>Q96G40</accession>
<evidence type="ECO:0000250" key="1"/>
<evidence type="ECO:0000250" key="2">
    <source>
        <dbReference type="UniProtKB" id="P97434"/>
    </source>
</evidence>
<evidence type="ECO:0000255" key="3"/>
<evidence type="ECO:0000255" key="4">
    <source>
        <dbReference type="PROSITE-ProRule" id="PRU00145"/>
    </source>
</evidence>
<evidence type="ECO:0000256" key="5">
    <source>
        <dbReference type="SAM" id="MobiDB-lite"/>
    </source>
</evidence>
<evidence type="ECO:0000269" key="6">
    <source>
    </source>
</evidence>
<evidence type="ECO:0000269" key="7">
    <source>
    </source>
</evidence>
<evidence type="ECO:0000269" key="8">
    <source>
    </source>
</evidence>
<evidence type="ECO:0000269" key="9">
    <source>
    </source>
</evidence>
<evidence type="ECO:0000269" key="10">
    <source ref="3"/>
</evidence>
<evidence type="ECO:0000303" key="11">
    <source>
    </source>
</evidence>
<evidence type="ECO:0000303" key="12">
    <source>
    </source>
</evidence>
<evidence type="ECO:0000303" key="13">
    <source ref="3"/>
</evidence>
<evidence type="ECO:0000305" key="14"/>
<evidence type="ECO:0000312" key="15">
    <source>
        <dbReference type="EMBL" id="AAH09982.2"/>
    </source>
</evidence>
<evidence type="ECO:0000312" key="16">
    <source>
        <dbReference type="EMBL" id="AAH75847.1"/>
    </source>
</evidence>
<evidence type="ECO:0000312" key="17">
    <source>
        <dbReference type="EMBL" id="AAI05988.1"/>
    </source>
</evidence>
<evidence type="ECO:0000312" key="18">
    <source>
        <dbReference type="EMBL" id="AAQ63176.1"/>
    </source>
</evidence>
<evidence type="ECO:0000312" key="19">
    <source>
        <dbReference type="EMBL" id="BAC78198.1"/>
    </source>
</evidence>
<evidence type="ECO:0000312" key="20">
    <source>
        <dbReference type="EMBL" id="BAD89507.1"/>
    </source>
</evidence>
<evidence type="ECO:0007744" key="21">
    <source>
    </source>
</evidence>
<evidence type="ECO:0007744" key="22">
    <source>
    </source>
</evidence>
<evidence type="ECO:0007744" key="23">
    <source>
    </source>
</evidence>
<evidence type="ECO:0007744" key="24">
    <source>
    </source>
</evidence>
<evidence type="ECO:0007744" key="25">
    <source>
    </source>
</evidence>
<evidence type="ECO:0007744" key="26">
    <source>
    </source>
</evidence>
<evidence type="ECO:0007744" key="27">
    <source>
    </source>
</evidence>
<reference evidence="14 18" key="1">
    <citation type="journal article" date="2003" name="J. Biol. Chem.">
        <title>Myosin phosphatase-Rho interacting protein. A new member of the myosin phosphatase complex that directly binds RhoA.</title>
        <authorList>
            <person name="Surks H.K."/>
            <person name="Richards C.T."/>
            <person name="Mendelsohn M.E."/>
        </authorList>
    </citation>
    <scope>NUCLEOTIDE SEQUENCE [MRNA] (ISOFORM 1)</scope>
    <scope>SUBCELLULAR LOCATION</scope>
    <scope>INTERACTION WITH PPP1R12A AND RHOA</scope>
    <source>
        <tissue evidence="18">Aorta</tissue>
    </source>
</reference>
<reference evidence="14 20" key="2">
    <citation type="journal article" date="2005" name="J. Biol. Chem.">
        <title>p116Rip decreases myosin II phosphorylation by activating myosin light chain phosphatase and by inactivating RhoA.</title>
        <authorList>
            <person name="Koga Y."/>
            <person name="Ikebe M."/>
        </authorList>
    </citation>
    <scope>NUCLEOTIDE SEQUENCE [MRNA] (ISOFORM 2)</scope>
    <scope>FUNCTION</scope>
    <scope>INTERACTION WITH PPP1R12A</scope>
</reference>
<reference evidence="14 19" key="3">
    <citation type="submission" date="2002-12" db="EMBL/GenBank/DDBJ databases">
        <title>Cloning of human orthologue RHOIP3 of Mus Rhoip3.</title>
        <authorList>
            <person name="Inazawa J."/>
            <person name="Imoto I."/>
        </authorList>
    </citation>
    <scope>NUCLEOTIDE SEQUENCE [MRNA] (ISOFORM 2)</scope>
    <scope>VARIANT GLN-327</scope>
</reference>
<reference key="4">
    <citation type="journal article" date="2006" name="Nature">
        <title>DNA sequence of human chromosome 17 and analysis of rearrangement in the human lineage.</title>
        <authorList>
            <person name="Zody M.C."/>
            <person name="Garber M."/>
            <person name="Adams D.J."/>
            <person name="Sharpe T."/>
            <person name="Harrow J."/>
            <person name="Lupski J.R."/>
            <person name="Nicholson C."/>
            <person name="Searle S.M."/>
            <person name="Wilming L."/>
            <person name="Young S.K."/>
            <person name="Abouelleil A."/>
            <person name="Allen N.R."/>
            <person name="Bi W."/>
            <person name="Bloom T."/>
            <person name="Borowsky M.L."/>
            <person name="Bugalter B.E."/>
            <person name="Butler J."/>
            <person name="Chang J.L."/>
            <person name="Chen C.-K."/>
            <person name="Cook A."/>
            <person name="Corum B."/>
            <person name="Cuomo C.A."/>
            <person name="de Jong P.J."/>
            <person name="DeCaprio D."/>
            <person name="Dewar K."/>
            <person name="FitzGerald M."/>
            <person name="Gilbert J."/>
            <person name="Gibson R."/>
            <person name="Gnerre S."/>
            <person name="Goldstein S."/>
            <person name="Grafham D.V."/>
            <person name="Grocock R."/>
            <person name="Hafez N."/>
            <person name="Hagopian D.S."/>
            <person name="Hart E."/>
            <person name="Norman C.H."/>
            <person name="Humphray S."/>
            <person name="Jaffe D.B."/>
            <person name="Jones M."/>
            <person name="Kamal M."/>
            <person name="Khodiyar V.K."/>
            <person name="LaButti K."/>
            <person name="Laird G."/>
            <person name="Lehoczky J."/>
            <person name="Liu X."/>
            <person name="Lokyitsang T."/>
            <person name="Loveland J."/>
            <person name="Lui A."/>
            <person name="Macdonald P."/>
            <person name="Major J.E."/>
            <person name="Matthews L."/>
            <person name="Mauceli E."/>
            <person name="McCarroll S.A."/>
            <person name="Mihalev A.H."/>
            <person name="Mudge J."/>
            <person name="Nguyen C."/>
            <person name="Nicol R."/>
            <person name="O'Leary S.B."/>
            <person name="Osoegawa K."/>
            <person name="Schwartz D.C."/>
            <person name="Shaw-Smith C."/>
            <person name="Stankiewicz P."/>
            <person name="Steward C."/>
            <person name="Swarbreck D."/>
            <person name="Venkataraman V."/>
            <person name="Whittaker C.A."/>
            <person name="Yang X."/>
            <person name="Zimmer A.R."/>
            <person name="Bradley A."/>
            <person name="Hubbard T."/>
            <person name="Birren B.W."/>
            <person name="Rogers J."/>
            <person name="Lander E.S."/>
            <person name="Nusbaum C."/>
        </authorList>
    </citation>
    <scope>NUCLEOTIDE SEQUENCE [LARGE SCALE GENOMIC DNA]</scope>
</reference>
<reference key="5">
    <citation type="journal article" date="2007" name="BMC Genomics">
        <title>The full-ORF clone resource of the German cDNA consortium.</title>
        <authorList>
            <person name="Bechtel S."/>
            <person name="Rosenfelder H."/>
            <person name="Duda A."/>
            <person name="Schmidt C.P."/>
            <person name="Ernst U."/>
            <person name="Wellenreuther R."/>
            <person name="Mehrle A."/>
            <person name="Schuster C."/>
            <person name="Bahr A."/>
            <person name="Bloecker H."/>
            <person name="Heubner D."/>
            <person name="Hoerlein A."/>
            <person name="Michel G."/>
            <person name="Wedler H."/>
            <person name="Koehrer K."/>
            <person name="Ottenwaelder B."/>
            <person name="Poustka A."/>
            <person name="Wiemann S."/>
            <person name="Schupp I."/>
        </authorList>
    </citation>
    <scope>NUCLEOTIDE SEQUENCE [LARGE SCALE MRNA] OF 38-1025 (ISOFORM 1)</scope>
    <scope>VARIANT GLN-327</scope>
    <source>
        <tissue>Melanoma</tissue>
    </source>
</reference>
<reference evidence="14 17" key="6">
    <citation type="journal article" date="2004" name="Genome Res.">
        <title>The status, quality, and expansion of the NIH full-length cDNA project: the Mammalian Gene Collection (MGC).</title>
        <authorList>
            <consortium name="The MGC Project Team"/>
        </authorList>
    </citation>
    <scope>NUCLEOTIDE SEQUENCE [LARGE SCALE MRNA] OF 157-1025 (ISOFORM 3)</scope>
    <scope>NUCLEOTIDE SEQUENCE [LARGE SCALE MRNA] OF 194-1025 (ISOFORM 1)</scope>
    <scope>NUCLEOTIDE SEQUENCE [LARGE SCALE MRNA] OF 377-1025 (ISOFORM 2)</scope>
    <source>
        <tissue evidence="16">Brain</tissue>
        <tissue evidence="17">Lymph</tissue>
        <tissue evidence="15">Muscle</tissue>
    </source>
</reference>
<reference evidence="14" key="7">
    <citation type="journal article" date="2005" name="J. Biol. Chem.">
        <title>M-RIP targets myosin phosphatase to stress fibers to regulate myosin light chain phosphorylation in vascular smooth muscle cells.</title>
        <authorList>
            <person name="Surks H.K."/>
            <person name="Riddick N."/>
            <person name="Ohtani K."/>
        </authorList>
    </citation>
    <scope>FUNCTION</scope>
    <scope>SUBCELLULAR LOCATION</scope>
    <scope>INTERACTION WITH PPP1R12A AND F-ACTIN</scope>
</reference>
<reference key="8">
    <citation type="journal article" date="2006" name="Cell">
        <title>Global, in vivo, and site-specific phosphorylation dynamics in signaling networks.</title>
        <authorList>
            <person name="Olsen J.V."/>
            <person name="Blagoev B."/>
            <person name="Gnad F."/>
            <person name="Macek B."/>
            <person name="Kumar C."/>
            <person name="Mortensen P."/>
            <person name="Mann M."/>
        </authorList>
    </citation>
    <scope>PHOSPHORYLATION [LARGE SCALE ANALYSIS] AT SER-619</scope>
    <scope>IDENTIFICATION BY MASS SPECTROMETRY [LARGE SCALE ANALYSIS]</scope>
    <source>
        <tissue>Cervix carcinoma</tissue>
    </source>
</reference>
<reference key="9">
    <citation type="journal article" date="2008" name="Mol. Cell">
        <title>Kinase-selective enrichment enables quantitative phosphoproteomics of the kinome across the cell cycle.</title>
        <authorList>
            <person name="Daub H."/>
            <person name="Olsen J.V."/>
            <person name="Bairlein M."/>
            <person name="Gnad F."/>
            <person name="Oppermann F.S."/>
            <person name="Korner R."/>
            <person name="Greff Z."/>
            <person name="Keri G."/>
            <person name="Stemmann O."/>
            <person name="Mann M."/>
        </authorList>
    </citation>
    <scope>IDENTIFICATION BY MASS SPECTROMETRY [LARGE SCALE ANALYSIS]</scope>
    <source>
        <tissue>Cervix carcinoma</tissue>
    </source>
</reference>
<reference key="10">
    <citation type="journal article" date="2008" name="Proc. Natl. Acad. Sci. U.S.A.">
        <title>A quantitative atlas of mitotic phosphorylation.</title>
        <authorList>
            <person name="Dephoure N."/>
            <person name="Zhou C."/>
            <person name="Villen J."/>
            <person name="Beausoleil S.A."/>
            <person name="Bakalarski C.E."/>
            <person name="Elledge S.J."/>
            <person name="Gygi S.P."/>
        </authorList>
    </citation>
    <scope>PHOSPHORYLATION [LARGE SCALE ANALYSIS] AT SER-192; SER-220; SER-224; SER-226; SER-289; SER-292; THR-295; SER-362; SER-365; SER-619; SER-891 AND SER-977</scope>
    <scope>IDENTIFICATION BY MASS SPECTROMETRY [LARGE SCALE ANALYSIS]</scope>
    <source>
        <tissue>Cervix carcinoma</tissue>
    </source>
</reference>
<reference key="11">
    <citation type="journal article" date="2009" name="Sci. Signal.">
        <title>Quantitative phosphoproteomic analysis of T cell receptor signaling reveals system-wide modulation of protein-protein interactions.</title>
        <authorList>
            <person name="Mayya V."/>
            <person name="Lundgren D.H."/>
            <person name="Hwang S.-I."/>
            <person name="Rezaul K."/>
            <person name="Wu L."/>
            <person name="Eng J.K."/>
            <person name="Rodionov V."/>
            <person name="Han D.K."/>
        </authorList>
    </citation>
    <scope>PHOSPHORYLATION [LARGE SCALE ANALYSIS] AT SER-289</scope>
    <scope>IDENTIFICATION BY MASS SPECTROMETRY [LARGE SCALE ANALYSIS]</scope>
    <source>
        <tissue>Leukemic T-cell</tissue>
    </source>
</reference>
<reference key="12">
    <citation type="journal article" date="2010" name="Sci. Signal.">
        <title>Quantitative phosphoproteomics reveals widespread full phosphorylation site occupancy during mitosis.</title>
        <authorList>
            <person name="Olsen J.V."/>
            <person name="Vermeulen M."/>
            <person name="Santamaria A."/>
            <person name="Kumar C."/>
            <person name="Miller M.L."/>
            <person name="Jensen L.J."/>
            <person name="Gnad F."/>
            <person name="Cox J."/>
            <person name="Jensen T.S."/>
            <person name="Nigg E.A."/>
            <person name="Brunak S."/>
            <person name="Mann M."/>
        </authorList>
    </citation>
    <scope>PHOSPHORYLATION [LARGE SCALE ANALYSIS] AT SER-220; SER-269; SER-289; SER-362; SER-365; SER-619; SER-891 AND SER-977</scope>
    <scope>IDENTIFICATION BY MASS SPECTROMETRY [LARGE SCALE ANALYSIS]</scope>
    <source>
        <tissue>Cervix carcinoma</tissue>
    </source>
</reference>
<reference key="13">
    <citation type="journal article" date="2011" name="BMC Syst. Biol.">
        <title>Initial characterization of the human central proteome.</title>
        <authorList>
            <person name="Burkard T.R."/>
            <person name="Planyavsky M."/>
            <person name="Kaupe I."/>
            <person name="Breitwieser F.P."/>
            <person name="Buerckstuemmer T."/>
            <person name="Bennett K.L."/>
            <person name="Superti-Furga G."/>
            <person name="Colinge J."/>
        </authorList>
    </citation>
    <scope>IDENTIFICATION BY MASS SPECTROMETRY [LARGE SCALE ANALYSIS]</scope>
</reference>
<reference key="14">
    <citation type="journal article" date="2011" name="Sci. Signal.">
        <title>System-wide temporal characterization of the proteome and phosphoproteome of human embryonic stem cell differentiation.</title>
        <authorList>
            <person name="Rigbolt K.T."/>
            <person name="Prokhorova T.A."/>
            <person name="Akimov V."/>
            <person name="Henningsen J."/>
            <person name="Johansen P.T."/>
            <person name="Kratchmarova I."/>
            <person name="Kassem M."/>
            <person name="Mann M."/>
            <person name="Olsen J.V."/>
            <person name="Blagoev B."/>
        </authorList>
    </citation>
    <scope>PHOSPHORYLATION [LARGE SCALE ANALYSIS] AT SER-977; SER-993 AND SER-1016</scope>
    <scope>IDENTIFICATION BY MASS SPECTROMETRY [LARGE SCALE ANALYSIS]</scope>
</reference>
<reference key="15">
    <citation type="journal article" date="2013" name="J. Proteome Res.">
        <title>Toward a comprehensive characterization of a human cancer cell phosphoproteome.</title>
        <authorList>
            <person name="Zhou H."/>
            <person name="Di Palma S."/>
            <person name="Preisinger C."/>
            <person name="Peng M."/>
            <person name="Polat A.N."/>
            <person name="Heck A.J."/>
            <person name="Mohammed S."/>
        </authorList>
    </citation>
    <scope>PHOSPHORYLATION [LARGE SCALE ANALYSIS] AT SER-224; SER-265; SER-269; SER-326; SER-493; SER-619; THR-646; SER-663; SER-891; SER-977 AND SER-993</scope>
    <scope>IDENTIFICATION BY MASS SPECTROMETRY [LARGE SCALE ANALYSIS]</scope>
    <source>
        <tissue>Cervix carcinoma</tissue>
        <tissue>Erythroleukemia</tissue>
    </source>
</reference>
<reference key="16">
    <citation type="journal article" date="2014" name="J. Proteomics">
        <title>An enzyme assisted RP-RPLC approach for in-depth analysis of human liver phosphoproteome.</title>
        <authorList>
            <person name="Bian Y."/>
            <person name="Song C."/>
            <person name="Cheng K."/>
            <person name="Dong M."/>
            <person name="Wang F."/>
            <person name="Huang J."/>
            <person name="Sun D."/>
            <person name="Wang L."/>
            <person name="Ye M."/>
            <person name="Zou H."/>
        </authorList>
    </citation>
    <scope>PHOSPHORYLATION [LARGE SCALE ANALYSIS] AT SER-217; SER-220; SER-226; THR-348; SER-362; SER-365; SER-800 AND SER-891</scope>
    <scope>IDENTIFICATION BY MASS SPECTROMETRY [LARGE SCALE ANALYSIS]</scope>
    <source>
        <tissue>Liver</tissue>
    </source>
</reference>
<gene>
    <name type="primary">MPRIP</name>
    <name type="synonym">KIAA0864</name>
    <name type="synonym">MRIP</name>
    <name evidence="19" type="synonym">RHOIP3</name>
</gene>
<keyword id="KW-0009">Actin-binding</keyword>
<keyword id="KW-0025">Alternative splicing</keyword>
<keyword id="KW-0175">Coiled coil</keyword>
<keyword id="KW-0963">Cytoplasm</keyword>
<keyword id="KW-0206">Cytoskeleton</keyword>
<keyword id="KW-0597">Phosphoprotein</keyword>
<keyword id="KW-1267">Proteomics identification</keyword>
<keyword id="KW-1185">Reference proteome</keyword>
<keyword id="KW-0677">Repeat</keyword>
<dbReference type="EMBL" id="AY296247">
    <property type="protein sequence ID" value="AAQ63176.1"/>
    <property type="molecule type" value="mRNA"/>
</dbReference>
<dbReference type="EMBL" id="AB189741">
    <property type="protein sequence ID" value="BAD89507.1"/>
    <property type="molecule type" value="mRNA"/>
</dbReference>
<dbReference type="EMBL" id="AB098507">
    <property type="protein sequence ID" value="BAC78198.1"/>
    <property type="molecule type" value="mRNA"/>
</dbReference>
<dbReference type="EMBL" id="AC079111">
    <property type="status" value="NOT_ANNOTATED_CDS"/>
    <property type="molecule type" value="Genomic_DNA"/>
</dbReference>
<dbReference type="EMBL" id="AC055811">
    <property type="status" value="NOT_ANNOTATED_CDS"/>
    <property type="molecule type" value="Genomic_DNA"/>
</dbReference>
<dbReference type="EMBL" id="AL834513">
    <property type="protein sequence ID" value="CAD39169.1"/>
    <property type="molecule type" value="mRNA"/>
</dbReference>
<dbReference type="EMBL" id="BC009982">
    <property type="protein sequence ID" value="AAH09982.2"/>
    <property type="molecule type" value="mRNA"/>
</dbReference>
<dbReference type="EMBL" id="BC075847">
    <property type="protein sequence ID" value="AAH75847.1"/>
    <property type="molecule type" value="mRNA"/>
</dbReference>
<dbReference type="EMBL" id="BC105987">
    <property type="protein sequence ID" value="AAI05988.1"/>
    <property type="molecule type" value="mRNA"/>
</dbReference>
<dbReference type="CCDS" id="CCDS32578.1">
    <molecule id="Q6WCQ1-1"/>
</dbReference>
<dbReference type="CCDS" id="CCDS42268.1">
    <molecule id="Q6WCQ1-2"/>
</dbReference>
<dbReference type="RefSeq" id="NP_055949.2">
    <molecule id="Q6WCQ1-2"/>
    <property type="nucleotide sequence ID" value="NM_015134.4"/>
</dbReference>
<dbReference type="RefSeq" id="NP_958431.2">
    <molecule id="Q6WCQ1-1"/>
    <property type="nucleotide sequence ID" value="NM_201274.4"/>
</dbReference>
<dbReference type="SMR" id="Q6WCQ1"/>
<dbReference type="BioGRID" id="116776">
    <property type="interactions" value="245"/>
</dbReference>
<dbReference type="CORUM" id="Q6WCQ1"/>
<dbReference type="FunCoup" id="Q6WCQ1">
    <property type="interactions" value="1551"/>
</dbReference>
<dbReference type="IntAct" id="Q6WCQ1">
    <property type="interactions" value="141"/>
</dbReference>
<dbReference type="MINT" id="Q6WCQ1"/>
<dbReference type="STRING" id="9606.ENSP00000379156"/>
<dbReference type="GlyCosmos" id="Q6WCQ1">
    <property type="glycosylation" value="1 site, 1 glycan"/>
</dbReference>
<dbReference type="GlyGen" id="Q6WCQ1">
    <property type="glycosylation" value="6 sites, 1 N-linked glycan (1 site), 1 O-linked glycan (4 sites)"/>
</dbReference>
<dbReference type="iPTMnet" id="Q6WCQ1"/>
<dbReference type="MetOSite" id="Q6WCQ1"/>
<dbReference type="PhosphoSitePlus" id="Q6WCQ1"/>
<dbReference type="SwissPalm" id="Q6WCQ1"/>
<dbReference type="BioMuta" id="MPRIP"/>
<dbReference type="DMDM" id="215274136"/>
<dbReference type="jPOST" id="Q6WCQ1"/>
<dbReference type="MassIVE" id="Q6WCQ1"/>
<dbReference type="PaxDb" id="9606-ENSP00000379156"/>
<dbReference type="PeptideAtlas" id="Q6WCQ1"/>
<dbReference type="ProteomicsDB" id="67759">
    <molecule id="Q6WCQ1-1"/>
</dbReference>
<dbReference type="ProteomicsDB" id="67760">
    <molecule id="Q6WCQ1-2"/>
</dbReference>
<dbReference type="ProteomicsDB" id="67761">
    <molecule id="Q6WCQ1-3"/>
</dbReference>
<dbReference type="Pumba" id="Q6WCQ1"/>
<dbReference type="Antibodypedia" id="13293">
    <property type="antibodies" value="204 antibodies from 31 providers"/>
</dbReference>
<dbReference type="DNASU" id="23164"/>
<dbReference type="Ensembl" id="ENST00000341712.8">
    <molecule id="Q6WCQ1-1"/>
    <property type="protein sequence ID" value="ENSP00000342379.4"/>
    <property type="gene ID" value="ENSG00000133030.22"/>
</dbReference>
<dbReference type="Ensembl" id="ENST00000395811.9">
    <molecule id="Q6WCQ1-2"/>
    <property type="protein sequence ID" value="ENSP00000379156.4"/>
    <property type="gene ID" value="ENSG00000133030.22"/>
</dbReference>
<dbReference type="GeneID" id="23164"/>
<dbReference type="KEGG" id="hsa:23164"/>
<dbReference type="UCSC" id="uc002gqu.3">
    <molecule id="Q6WCQ1-1"/>
    <property type="organism name" value="human"/>
</dbReference>
<dbReference type="AGR" id="HGNC:30321"/>
<dbReference type="CTD" id="23164"/>
<dbReference type="DisGeNET" id="23164"/>
<dbReference type="GeneCards" id="MPRIP"/>
<dbReference type="HGNC" id="HGNC:30321">
    <property type="gene designation" value="MPRIP"/>
</dbReference>
<dbReference type="HPA" id="ENSG00000133030">
    <property type="expression patterns" value="Low tissue specificity"/>
</dbReference>
<dbReference type="MalaCards" id="MPRIP"/>
<dbReference type="MIM" id="612935">
    <property type="type" value="gene"/>
</dbReference>
<dbReference type="neXtProt" id="NX_Q6WCQ1"/>
<dbReference type="OpenTargets" id="ENSG00000133030"/>
<dbReference type="PharmGKB" id="PA162396092"/>
<dbReference type="VEuPathDB" id="HostDB:ENSG00000133030"/>
<dbReference type="eggNOG" id="KOG4807">
    <property type="taxonomic scope" value="Eukaryota"/>
</dbReference>
<dbReference type="GeneTree" id="ENSGT00940000155286"/>
<dbReference type="HOGENOM" id="CLU_011327_0_0_1"/>
<dbReference type="InParanoid" id="Q6WCQ1"/>
<dbReference type="OrthoDB" id="9942268at2759"/>
<dbReference type="PAN-GO" id="Q6WCQ1">
    <property type="GO annotations" value="3 GO annotations based on evolutionary models"/>
</dbReference>
<dbReference type="PhylomeDB" id="Q6WCQ1"/>
<dbReference type="TreeFam" id="TF329258"/>
<dbReference type="PathwayCommons" id="Q6WCQ1"/>
<dbReference type="Reactome" id="R-HSA-6802952">
    <property type="pathway name" value="Signaling by BRAF and RAF1 fusions"/>
</dbReference>
<dbReference type="SignaLink" id="Q6WCQ1"/>
<dbReference type="SIGNOR" id="Q6WCQ1"/>
<dbReference type="BioGRID-ORCS" id="23164">
    <property type="hits" value="92 hits in 1161 CRISPR screens"/>
</dbReference>
<dbReference type="ChiTaRS" id="MPRIP">
    <property type="organism name" value="human"/>
</dbReference>
<dbReference type="GeneWiki" id="M-RIP"/>
<dbReference type="GenomeRNAi" id="23164"/>
<dbReference type="Pharos" id="Q6WCQ1">
    <property type="development level" value="Tbio"/>
</dbReference>
<dbReference type="PRO" id="PR:Q6WCQ1"/>
<dbReference type="Proteomes" id="UP000005640">
    <property type="component" value="Chromosome 17"/>
</dbReference>
<dbReference type="RNAct" id="Q6WCQ1">
    <property type="molecule type" value="protein"/>
</dbReference>
<dbReference type="Bgee" id="ENSG00000133030">
    <property type="expression patterns" value="Expressed in lower esophagus mucosa and 207 other cell types or tissues"/>
</dbReference>
<dbReference type="ExpressionAtlas" id="Q6WCQ1">
    <property type="expression patterns" value="baseline and differential"/>
</dbReference>
<dbReference type="GO" id="GO:0015629">
    <property type="term" value="C:actin cytoskeleton"/>
    <property type="evidence" value="ECO:0000314"/>
    <property type="project" value="HPA"/>
</dbReference>
<dbReference type="GO" id="GO:0005829">
    <property type="term" value="C:cytosol"/>
    <property type="evidence" value="ECO:0000314"/>
    <property type="project" value="HPA"/>
</dbReference>
<dbReference type="GO" id="GO:0005925">
    <property type="term" value="C:focal adhesion"/>
    <property type="evidence" value="ECO:0007005"/>
    <property type="project" value="UniProtKB"/>
</dbReference>
<dbReference type="GO" id="GO:0051015">
    <property type="term" value="F:actin filament binding"/>
    <property type="evidence" value="ECO:0000318"/>
    <property type="project" value="GO_Central"/>
</dbReference>
<dbReference type="GO" id="GO:0045296">
    <property type="term" value="F:cadherin binding"/>
    <property type="evidence" value="ECO:0007005"/>
    <property type="project" value="BHF-UCL"/>
</dbReference>
<dbReference type="CDD" id="cd13275">
    <property type="entry name" value="PH_M-RIP"/>
    <property type="match status" value="1"/>
</dbReference>
<dbReference type="CDD" id="cd01236">
    <property type="entry name" value="PH_RIP"/>
    <property type="match status" value="1"/>
</dbReference>
<dbReference type="FunFam" id="2.30.29.30:FF:000133">
    <property type="entry name" value="myosin phosphatase Rho-interacting protein isoform X1"/>
    <property type="match status" value="1"/>
</dbReference>
<dbReference type="FunFam" id="2.30.29.30:FF:000190">
    <property type="entry name" value="myosin phosphatase Rho-interacting protein isoform X2"/>
    <property type="match status" value="1"/>
</dbReference>
<dbReference type="Gene3D" id="2.30.29.30">
    <property type="entry name" value="Pleckstrin-homology domain (PH domain)/Phosphotyrosine-binding domain (PTB)"/>
    <property type="match status" value="2"/>
</dbReference>
<dbReference type="InterPro" id="IPR052223">
    <property type="entry name" value="Actin_Cytoskeleton_Reg"/>
</dbReference>
<dbReference type="InterPro" id="IPR039597">
    <property type="entry name" value="M-RIP_PH"/>
</dbReference>
<dbReference type="InterPro" id="IPR011993">
    <property type="entry name" value="PH-like_dom_sf"/>
</dbReference>
<dbReference type="InterPro" id="IPR001849">
    <property type="entry name" value="PH_domain"/>
</dbReference>
<dbReference type="PANTHER" id="PTHR17271:SF9">
    <property type="entry name" value="MYOSIN PHOSPHATASE RHO-INTERACTING PROTEIN"/>
    <property type="match status" value="1"/>
</dbReference>
<dbReference type="PANTHER" id="PTHR17271">
    <property type="entry name" value="PLECKSTRIN HOMOLOGY PH DOMAIN-CONTAINING PROTEIN"/>
    <property type="match status" value="1"/>
</dbReference>
<dbReference type="Pfam" id="PF00169">
    <property type="entry name" value="PH"/>
    <property type="match status" value="2"/>
</dbReference>
<dbReference type="SMART" id="SM00233">
    <property type="entry name" value="PH"/>
    <property type="match status" value="2"/>
</dbReference>
<dbReference type="SUPFAM" id="SSF50729">
    <property type="entry name" value="PH domain-like"/>
    <property type="match status" value="2"/>
</dbReference>
<dbReference type="PROSITE" id="PS50003">
    <property type="entry name" value="PH_DOMAIN"/>
    <property type="match status" value="2"/>
</dbReference>